<name>KTHY_MALP2</name>
<dbReference type="EC" id="2.7.4.9" evidence="1"/>
<dbReference type="EMBL" id="BA000026">
    <property type="protein sequence ID" value="BAC44607.1"/>
    <property type="molecule type" value="Genomic_DNA"/>
</dbReference>
<dbReference type="RefSeq" id="WP_011077636.1">
    <property type="nucleotide sequence ID" value="NC_004432.1"/>
</dbReference>
<dbReference type="SMR" id="Q8EUV4"/>
<dbReference type="FunCoup" id="Q8EUV4">
    <property type="interactions" value="191"/>
</dbReference>
<dbReference type="STRING" id="272633.gene:10731936"/>
<dbReference type="KEGG" id="mpe:MYPE8140"/>
<dbReference type="eggNOG" id="COG0125">
    <property type="taxonomic scope" value="Bacteria"/>
</dbReference>
<dbReference type="HOGENOM" id="CLU_049131_0_2_14"/>
<dbReference type="InParanoid" id="Q8EUV4"/>
<dbReference type="Proteomes" id="UP000002522">
    <property type="component" value="Chromosome"/>
</dbReference>
<dbReference type="GO" id="GO:0005829">
    <property type="term" value="C:cytosol"/>
    <property type="evidence" value="ECO:0007669"/>
    <property type="project" value="TreeGrafter"/>
</dbReference>
<dbReference type="GO" id="GO:0005524">
    <property type="term" value="F:ATP binding"/>
    <property type="evidence" value="ECO:0007669"/>
    <property type="project" value="UniProtKB-UniRule"/>
</dbReference>
<dbReference type="GO" id="GO:0004798">
    <property type="term" value="F:dTMP kinase activity"/>
    <property type="evidence" value="ECO:0007669"/>
    <property type="project" value="UniProtKB-UniRule"/>
</dbReference>
<dbReference type="GO" id="GO:0006233">
    <property type="term" value="P:dTDP biosynthetic process"/>
    <property type="evidence" value="ECO:0007669"/>
    <property type="project" value="InterPro"/>
</dbReference>
<dbReference type="GO" id="GO:0006235">
    <property type="term" value="P:dTTP biosynthetic process"/>
    <property type="evidence" value="ECO:0007669"/>
    <property type="project" value="UniProtKB-UniRule"/>
</dbReference>
<dbReference type="GO" id="GO:0006227">
    <property type="term" value="P:dUDP biosynthetic process"/>
    <property type="evidence" value="ECO:0007669"/>
    <property type="project" value="TreeGrafter"/>
</dbReference>
<dbReference type="CDD" id="cd01672">
    <property type="entry name" value="TMPK"/>
    <property type="match status" value="1"/>
</dbReference>
<dbReference type="FunFam" id="3.40.50.300:FF:000225">
    <property type="entry name" value="Thymidylate kinase"/>
    <property type="match status" value="1"/>
</dbReference>
<dbReference type="Gene3D" id="3.40.50.300">
    <property type="entry name" value="P-loop containing nucleotide triphosphate hydrolases"/>
    <property type="match status" value="1"/>
</dbReference>
<dbReference type="HAMAP" id="MF_00165">
    <property type="entry name" value="Thymidylate_kinase"/>
    <property type="match status" value="1"/>
</dbReference>
<dbReference type="InterPro" id="IPR027417">
    <property type="entry name" value="P-loop_NTPase"/>
</dbReference>
<dbReference type="InterPro" id="IPR039430">
    <property type="entry name" value="Thymidylate_kin-like_dom"/>
</dbReference>
<dbReference type="InterPro" id="IPR018095">
    <property type="entry name" value="Thymidylate_kin_CS"/>
</dbReference>
<dbReference type="InterPro" id="IPR018094">
    <property type="entry name" value="Thymidylate_kinase"/>
</dbReference>
<dbReference type="NCBIfam" id="TIGR00041">
    <property type="entry name" value="DTMP_kinase"/>
    <property type="match status" value="1"/>
</dbReference>
<dbReference type="PANTHER" id="PTHR10344">
    <property type="entry name" value="THYMIDYLATE KINASE"/>
    <property type="match status" value="1"/>
</dbReference>
<dbReference type="PANTHER" id="PTHR10344:SF4">
    <property type="entry name" value="UMP-CMP KINASE 2, MITOCHONDRIAL"/>
    <property type="match status" value="1"/>
</dbReference>
<dbReference type="Pfam" id="PF02223">
    <property type="entry name" value="Thymidylate_kin"/>
    <property type="match status" value="1"/>
</dbReference>
<dbReference type="SUPFAM" id="SSF52540">
    <property type="entry name" value="P-loop containing nucleoside triphosphate hydrolases"/>
    <property type="match status" value="1"/>
</dbReference>
<dbReference type="PROSITE" id="PS01331">
    <property type="entry name" value="THYMIDYLATE_KINASE"/>
    <property type="match status" value="1"/>
</dbReference>
<protein>
    <recommendedName>
        <fullName evidence="1">Thymidylate kinase</fullName>
        <ecNumber evidence="1">2.7.4.9</ecNumber>
    </recommendedName>
    <alternativeName>
        <fullName evidence="1">dTMP kinase</fullName>
    </alternativeName>
</protein>
<accession>Q8EUV4</accession>
<comment type="function">
    <text evidence="1">Phosphorylation of dTMP to form dTDP in both de novo and salvage pathways of dTTP synthesis.</text>
</comment>
<comment type="catalytic activity">
    <reaction evidence="1">
        <text>dTMP + ATP = dTDP + ADP</text>
        <dbReference type="Rhea" id="RHEA:13517"/>
        <dbReference type="ChEBI" id="CHEBI:30616"/>
        <dbReference type="ChEBI" id="CHEBI:58369"/>
        <dbReference type="ChEBI" id="CHEBI:63528"/>
        <dbReference type="ChEBI" id="CHEBI:456216"/>
        <dbReference type="EC" id="2.7.4.9"/>
    </reaction>
</comment>
<comment type="similarity">
    <text evidence="1">Belongs to the thymidylate kinase family.</text>
</comment>
<proteinExistence type="inferred from homology"/>
<sequence>MQLDKGLFVAFEGPDACGKSTVSKLVYQKLINFFNNKDSVILTREPGGTEVGEKIREILVNYDIDPRTEALLFAASRTEHVWNVILKAKANKKIILCDRFIHSSLVYQGIVKNLGYKNVYKVNQFGISKIKPDIVFYFSANPKVLLERKTKDKDRDIFDRLDNQYAQEENLKKIIGGYSSILQFDNRNVIRLDALKPVEELANKICATILERVR</sequence>
<evidence type="ECO:0000255" key="1">
    <source>
        <dbReference type="HAMAP-Rule" id="MF_00165"/>
    </source>
</evidence>
<reference key="1">
    <citation type="journal article" date="2002" name="Nucleic Acids Res.">
        <title>The complete genomic sequence of Mycoplasma penetrans, an intracellular bacterial pathogen in humans.</title>
        <authorList>
            <person name="Sasaki Y."/>
            <person name="Ishikawa J."/>
            <person name="Yamashita A."/>
            <person name="Oshima K."/>
            <person name="Kenri T."/>
            <person name="Furuya K."/>
            <person name="Yoshino C."/>
            <person name="Horino A."/>
            <person name="Shiba T."/>
            <person name="Sasaki T."/>
            <person name="Hattori M."/>
        </authorList>
    </citation>
    <scope>NUCLEOTIDE SEQUENCE [LARGE SCALE GENOMIC DNA]</scope>
    <source>
        <strain>HF-2</strain>
    </source>
</reference>
<keyword id="KW-0067">ATP-binding</keyword>
<keyword id="KW-0418">Kinase</keyword>
<keyword id="KW-0545">Nucleotide biosynthesis</keyword>
<keyword id="KW-0547">Nucleotide-binding</keyword>
<keyword id="KW-1185">Reference proteome</keyword>
<keyword id="KW-0808">Transferase</keyword>
<organism>
    <name type="scientific">Malacoplasma penetrans (strain HF-2)</name>
    <name type="common">Mycoplasma penetrans</name>
    <dbReference type="NCBI Taxonomy" id="272633"/>
    <lineage>
        <taxon>Bacteria</taxon>
        <taxon>Bacillati</taxon>
        <taxon>Mycoplasmatota</taxon>
        <taxon>Mycoplasmoidales</taxon>
        <taxon>Mycoplasmoidaceae</taxon>
        <taxon>Malacoplasma</taxon>
    </lineage>
</organism>
<gene>
    <name evidence="1" type="primary">tmk</name>
    <name type="ordered locus">MYPE8140</name>
</gene>
<feature type="chain" id="PRO_0000155306" description="Thymidylate kinase">
    <location>
        <begin position="1"/>
        <end position="214"/>
    </location>
</feature>
<feature type="binding site" evidence="1">
    <location>
        <begin position="13"/>
        <end position="20"/>
    </location>
    <ligand>
        <name>ATP</name>
        <dbReference type="ChEBI" id="CHEBI:30616"/>
    </ligand>
</feature>